<dbReference type="EC" id="2.6.1.37" evidence="1"/>
<dbReference type="EMBL" id="CP000011">
    <property type="protein sequence ID" value="AAU47119.1"/>
    <property type="molecule type" value="Genomic_DNA"/>
</dbReference>
<dbReference type="RefSeq" id="WP_004194610.1">
    <property type="nucleotide sequence ID" value="NC_006349.2"/>
</dbReference>
<dbReference type="RefSeq" id="YP_105553.1">
    <property type="nucleotide sequence ID" value="NC_006349.2"/>
</dbReference>
<dbReference type="SMR" id="Q62CM5"/>
<dbReference type="KEGG" id="bma:BMAA0852"/>
<dbReference type="PATRIC" id="fig|243160.12.peg.4383"/>
<dbReference type="eggNOG" id="COG0075">
    <property type="taxonomic scope" value="Bacteria"/>
</dbReference>
<dbReference type="HOGENOM" id="CLU_027686_3_1_4"/>
<dbReference type="Proteomes" id="UP000006693">
    <property type="component" value="Chromosome 2"/>
</dbReference>
<dbReference type="GO" id="GO:0047304">
    <property type="term" value="F:2-aminoethylphosphonate-pyruvate transaminase activity"/>
    <property type="evidence" value="ECO:0007669"/>
    <property type="project" value="UniProtKB-UniRule"/>
</dbReference>
<dbReference type="GO" id="GO:0019700">
    <property type="term" value="P:organic phosphonate catabolic process"/>
    <property type="evidence" value="ECO:0007669"/>
    <property type="project" value="InterPro"/>
</dbReference>
<dbReference type="Gene3D" id="3.90.1150.10">
    <property type="entry name" value="Aspartate Aminotransferase, domain 1"/>
    <property type="match status" value="1"/>
</dbReference>
<dbReference type="Gene3D" id="3.40.640.10">
    <property type="entry name" value="Type I PLP-dependent aspartate aminotransferase-like (Major domain)"/>
    <property type="match status" value="1"/>
</dbReference>
<dbReference type="HAMAP" id="MF_01376">
    <property type="entry name" value="PhnW_aminotrans_5"/>
    <property type="match status" value="1"/>
</dbReference>
<dbReference type="InterPro" id="IPR000192">
    <property type="entry name" value="Aminotrans_V_dom"/>
</dbReference>
<dbReference type="InterPro" id="IPR012703">
    <property type="entry name" value="NH2EtPonate_pyrv_transaminase"/>
</dbReference>
<dbReference type="InterPro" id="IPR015424">
    <property type="entry name" value="PyrdxlP-dep_Trfase"/>
</dbReference>
<dbReference type="InterPro" id="IPR015421">
    <property type="entry name" value="PyrdxlP-dep_Trfase_major"/>
</dbReference>
<dbReference type="InterPro" id="IPR015422">
    <property type="entry name" value="PyrdxlP-dep_Trfase_small"/>
</dbReference>
<dbReference type="InterPro" id="IPR024169">
    <property type="entry name" value="SP_NH2Trfase/AEP_transaminase"/>
</dbReference>
<dbReference type="NCBIfam" id="TIGR03301">
    <property type="entry name" value="PhnW-AepZ"/>
    <property type="match status" value="1"/>
</dbReference>
<dbReference type="NCBIfam" id="NF010006">
    <property type="entry name" value="PRK13479.1"/>
    <property type="match status" value="1"/>
</dbReference>
<dbReference type="NCBIfam" id="TIGR02326">
    <property type="entry name" value="transamin_PhnW"/>
    <property type="match status" value="1"/>
</dbReference>
<dbReference type="PANTHER" id="PTHR42778">
    <property type="entry name" value="2-AMINOETHYLPHOSPHONATE--PYRUVATE TRANSAMINASE"/>
    <property type="match status" value="1"/>
</dbReference>
<dbReference type="PANTHER" id="PTHR42778:SF1">
    <property type="entry name" value="2-AMINOETHYLPHOSPHONATE--PYRUVATE TRANSAMINASE"/>
    <property type="match status" value="1"/>
</dbReference>
<dbReference type="Pfam" id="PF00266">
    <property type="entry name" value="Aminotran_5"/>
    <property type="match status" value="1"/>
</dbReference>
<dbReference type="PIRSF" id="PIRSF000524">
    <property type="entry name" value="SPT"/>
    <property type="match status" value="1"/>
</dbReference>
<dbReference type="SUPFAM" id="SSF53383">
    <property type="entry name" value="PLP-dependent transferases"/>
    <property type="match status" value="1"/>
</dbReference>
<proteinExistence type="inferred from homology"/>
<reference key="1">
    <citation type="journal article" date="2004" name="Proc. Natl. Acad. Sci. U.S.A.">
        <title>Structural flexibility in the Burkholderia mallei genome.</title>
        <authorList>
            <person name="Nierman W.C."/>
            <person name="DeShazer D."/>
            <person name="Kim H.S."/>
            <person name="Tettelin H."/>
            <person name="Nelson K.E."/>
            <person name="Feldblyum T.V."/>
            <person name="Ulrich R.L."/>
            <person name="Ronning C.M."/>
            <person name="Brinkac L.M."/>
            <person name="Daugherty S.C."/>
            <person name="Davidsen T.D."/>
            <person name="DeBoy R.T."/>
            <person name="Dimitrov G."/>
            <person name="Dodson R.J."/>
            <person name="Durkin A.S."/>
            <person name="Gwinn M.L."/>
            <person name="Haft D.H."/>
            <person name="Khouri H.M."/>
            <person name="Kolonay J.F."/>
            <person name="Madupu R."/>
            <person name="Mohammoud Y."/>
            <person name="Nelson W.C."/>
            <person name="Radune D."/>
            <person name="Romero C.M."/>
            <person name="Sarria S."/>
            <person name="Selengut J."/>
            <person name="Shamblin C."/>
            <person name="Sullivan S.A."/>
            <person name="White O."/>
            <person name="Yu Y."/>
            <person name="Zafar N."/>
            <person name="Zhou L."/>
            <person name="Fraser C.M."/>
        </authorList>
    </citation>
    <scope>NUCLEOTIDE SEQUENCE [LARGE SCALE GENOMIC DNA]</scope>
    <source>
        <strain>ATCC 23344</strain>
    </source>
</reference>
<comment type="function">
    <text evidence="1">Involved in phosphonate degradation.</text>
</comment>
<comment type="catalytic activity">
    <reaction evidence="1">
        <text>(2-aminoethyl)phosphonate + pyruvate = phosphonoacetaldehyde + L-alanine</text>
        <dbReference type="Rhea" id="RHEA:17021"/>
        <dbReference type="ChEBI" id="CHEBI:15361"/>
        <dbReference type="ChEBI" id="CHEBI:57418"/>
        <dbReference type="ChEBI" id="CHEBI:57972"/>
        <dbReference type="ChEBI" id="CHEBI:58383"/>
        <dbReference type="EC" id="2.6.1.37"/>
    </reaction>
</comment>
<comment type="cofactor">
    <cofactor evidence="1">
        <name>pyridoxal 5'-phosphate</name>
        <dbReference type="ChEBI" id="CHEBI:597326"/>
    </cofactor>
</comment>
<comment type="subunit">
    <text evidence="1">Homodimer.</text>
</comment>
<comment type="similarity">
    <text evidence="1">Belongs to the class-V pyridoxal-phosphate-dependent aminotransferase family. PhnW subfamily.</text>
</comment>
<comment type="caution">
    <text evidence="2">The second enzyme involved in phosphonate degradation (PhnX, EC 3.11.1.1) is not found in this organism. The function of this enzyme is therefore uncertain.</text>
</comment>
<sequence length="369" mass="38859">MPERDPILLTPGPLTTSRMTRDAMLRDWGSWDAAFNRLTKSVCADLVRIAGGGDAYVCVPLQGSGTFAVEATLGTLVPRDARVLVPNNGAYCARIAAILRRLGIAHVELPFAEDEPASAHAIDAALARDARLTHVALVHLETSAGLLNPLDDIAAVCRARGRALIVDAMSSFGALPIALAASGIDALISASGKCLEGVPGMGFAIVRRSALEAAEGRSPSVALDLHDQYAYMQRTSQWRFTPPTHVLAALRAALDQFFDEGGQPARGARYARNCATLVDGMRALGFEPFLDARAQASVIVTFYAPADPAYAFPAFYAAVRDAGYVLYPGKLTTADTFRVGCIGALGADEMRGAVAAIGGALESLGIAMR</sequence>
<evidence type="ECO:0000255" key="1">
    <source>
        <dbReference type="HAMAP-Rule" id="MF_01376"/>
    </source>
</evidence>
<evidence type="ECO:0000305" key="2"/>
<name>PHNW_BURMA</name>
<keyword id="KW-0032">Aminotransferase</keyword>
<keyword id="KW-0663">Pyridoxal phosphate</keyword>
<keyword id="KW-0670">Pyruvate</keyword>
<keyword id="KW-1185">Reference proteome</keyword>
<keyword id="KW-0808">Transferase</keyword>
<accession>Q62CM5</accession>
<gene>
    <name evidence="1" type="primary">phnW</name>
    <name type="ordered locus">BMAA0852</name>
</gene>
<feature type="chain" id="PRO_0000286762" description="2-aminoethylphosphonate--pyruvate transaminase">
    <location>
        <begin position="1"/>
        <end position="369"/>
    </location>
</feature>
<feature type="modified residue" description="N6-(pyridoxal phosphate)lysine" evidence="1">
    <location>
        <position position="193"/>
    </location>
</feature>
<protein>
    <recommendedName>
        <fullName evidence="1">2-aminoethylphosphonate--pyruvate transaminase</fullName>
        <ecNumber evidence="1">2.6.1.37</ecNumber>
    </recommendedName>
    <alternativeName>
        <fullName evidence="1">2-aminoethylphosphonate aminotransferase</fullName>
    </alternativeName>
    <alternativeName>
        <fullName evidence="1">AEP transaminase</fullName>
        <shortName evidence="1">AEPT</shortName>
    </alternativeName>
</protein>
<organism>
    <name type="scientific">Burkholderia mallei (strain ATCC 23344)</name>
    <dbReference type="NCBI Taxonomy" id="243160"/>
    <lineage>
        <taxon>Bacteria</taxon>
        <taxon>Pseudomonadati</taxon>
        <taxon>Pseudomonadota</taxon>
        <taxon>Betaproteobacteria</taxon>
        <taxon>Burkholderiales</taxon>
        <taxon>Burkholderiaceae</taxon>
        <taxon>Burkholderia</taxon>
        <taxon>pseudomallei group</taxon>
    </lineage>
</organism>